<accession>Q09147</accession>
<accession>A4V1Y3</accession>
<accession>Q712V2</accession>
<accession>Q9VUC8</accession>
<evidence type="ECO:0000250" key="1"/>
<evidence type="ECO:0000255" key="2"/>
<evidence type="ECO:0000255" key="3">
    <source>
        <dbReference type="PROSITE-ProRule" id="PRU00114"/>
    </source>
</evidence>
<evidence type="ECO:0000255" key="4">
    <source>
        <dbReference type="PROSITE-ProRule" id="PRU00159"/>
    </source>
</evidence>
<evidence type="ECO:0000255" key="5">
    <source>
        <dbReference type="PROSITE-ProRule" id="PRU10028"/>
    </source>
</evidence>
<evidence type="ECO:0000256" key="6">
    <source>
        <dbReference type="SAM" id="MobiDB-lite"/>
    </source>
</evidence>
<evidence type="ECO:0000269" key="7">
    <source>
    </source>
</evidence>
<evidence type="ECO:0000269" key="8">
    <source>
    </source>
</evidence>
<evidence type="ECO:0000269" key="9">
    <source>
    </source>
</evidence>
<evidence type="ECO:0000305" key="10"/>
<reference key="1">
    <citation type="journal article" date="1993" name="Development">
        <title>Two FGF-receptor homologues of Drosophila: one is expressed in mesodermal primordium in early embryos.</title>
        <authorList>
            <person name="Shishido E."/>
            <person name="Higashijima S."/>
            <person name="Emori Y."/>
            <person name="Saigo K."/>
        </authorList>
    </citation>
    <scope>NUCLEOTIDE SEQUENCE [MRNA]</scope>
    <scope>FUNCTION</scope>
    <scope>TISSUE SPECIFICITY</scope>
    <source>
        <strain>Canton-S</strain>
    </source>
</reference>
<reference key="2">
    <citation type="journal article" date="2000" name="Science">
        <title>The genome sequence of Drosophila melanogaster.</title>
        <authorList>
            <person name="Adams M.D."/>
            <person name="Celniker S.E."/>
            <person name="Holt R.A."/>
            <person name="Evans C.A."/>
            <person name="Gocayne J.D."/>
            <person name="Amanatides P.G."/>
            <person name="Scherer S.E."/>
            <person name="Li P.W."/>
            <person name="Hoskins R.A."/>
            <person name="Galle R.F."/>
            <person name="George R.A."/>
            <person name="Lewis S.E."/>
            <person name="Richards S."/>
            <person name="Ashburner M."/>
            <person name="Henderson S.N."/>
            <person name="Sutton G.G."/>
            <person name="Wortman J.R."/>
            <person name="Yandell M.D."/>
            <person name="Zhang Q."/>
            <person name="Chen L.X."/>
            <person name="Brandon R.C."/>
            <person name="Rogers Y.-H.C."/>
            <person name="Blazej R.G."/>
            <person name="Champe M."/>
            <person name="Pfeiffer B.D."/>
            <person name="Wan K.H."/>
            <person name="Doyle C."/>
            <person name="Baxter E.G."/>
            <person name="Helt G."/>
            <person name="Nelson C.R."/>
            <person name="Miklos G.L.G."/>
            <person name="Abril J.F."/>
            <person name="Agbayani A."/>
            <person name="An H.-J."/>
            <person name="Andrews-Pfannkoch C."/>
            <person name="Baldwin D."/>
            <person name="Ballew R.M."/>
            <person name="Basu A."/>
            <person name="Baxendale J."/>
            <person name="Bayraktaroglu L."/>
            <person name="Beasley E.M."/>
            <person name="Beeson K.Y."/>
            <person name="Benos P.V."/>
            <person name="Berman B.P."/>
            <person name="Bhandari D."/>
            <person name="Bolshakov S."/>
            <person name="Borkova D."/>
            <person name="Botchan M.R."/>
            <person name="Bouck J."/>
            <person name="Brokstein P."/>
            <person name="Brottier P."/>
            <person name="Burtis K.C."/>
            <person name="Busam D.A."/>
            <person name="Butler H."/>
            <person name="Cadieu E."/>
            <person name="Center A."/>
            <person name="Chandra I."/>
            <person name="Cherry J.M."/>
            <person name="Cawley S."/>
            <person name="Dahlke C."/>
            <person name="Davenport L.B."/>
            <person name="Davies P."/>
            <person name="de Pablos B."/>
            <person name="Delcher A."/>
            <person name="Deng Z."/>
            <person name="Mays A.D."/>
            <person name="Dew I."/>
            <person name="Dietz S.M."/>
            <person name="Dodson K."/>
            <person name="Doup L.E."/>
            <person name="Downes M."/>
            <person name="Dugan-Rocha S."/>
            <person name="Dunkov B.C."/>
            <person name="Dunn P."/>
            <person name="Durbin K.J."/>
            <person name="Evangelista C.C."/>
            <person name="Ferraz C."/>
            <person name="Ferriera S."/>
            <person name="Fleischmann W."/>
            <person name="Fosler C."/>
            <person name="Gabrielian A.E."/>
            <person name="Garg N.S."/>
            <person name="Gelbart W.M."/>
            <person name="Glasser K."/>
            <person name="Glodek A."/>
            <person name="Gong F."/>
            <person name="Gorrell J.H."/>
            <person name="Gu Z."/>
            <person name="Guan P."/>
            <person name="Harris M."/>
            <person name="Harris N.L."/>
            <person name="Harvey D.A."/>
            <person name="Heiman T.J."/>
            <person name="Hernandez J.R."/>
            <person name="Houck J."/>
            <person name="Hostin D."/>
            <person name="Houston K.A."/>
            <person name="Howland T.J."/>
            <person name="Wei M.-H."/>
            <person name="Ibegwam C."/>
            <person name="Jalali M."/>
            <person name="Kalush F."/>
            <person name="Karpen G.H."/>
            <person name="Ke Z."/>
            <person name="Kennison J.A."/>
            <person name="Ketchum K.A."/>
            <person name="Kimmel B.E."/>
            <person name="Kodira C.D."/>
            <person name="Kraft C.L."/>
            <person name="Kravitz S."/>
            <person name="Kulp D."/>
            <person name="Lai Z."/>
            <person name="Lasko P."/>
            <person name="Lei Y."/>
            <person name="Levitsky A.A."/>
            <person name="Li J.H."/>
            <person name="Li Z."/>
            <person name="Liang Y."/>
            <person name="Lin X."/>
            <person name="Liu X."/>
            <person name="Mattei B."/>
            <person name="McIntosh T.C."/>
            <person name="McLeod M.P."/>
            <person name="McPherson D."/>
            <person name="Merkulov G."/>
            <person name="Milshina N.V."/>
            <person name="Mobarry C."/>
            <person name="Morris J."/>
            <person name="Moshrefi A."/>
            <person name="Mount S.M."/>
            <person name="Moy M."/>
            <person name="Murphy B."/>
            <person name="Murphy L."/>
            <person name="Muzny D.M."/>
            <person name="Nelson D.L."/>
            <person name="Nelson D.R."/>
            <person name="Nelson K.A."/>
            <person name="Nixon K."/>
            <person name="Nusskern D.R."/>
            <person name="Pacleb J.M."/>
            <person name="Palazzolo M."/>
            <person name="Pittman G.S."/>
            <person name="Pan S."/>
            <person name="Pollard J."/>
            <person name="Puri V."/>
            <person name="Reese M.G."/>
            <person name="Reinert K."/>
            <person name="Remington K."/>
            <person name="Saunders R.D.C."/>
            <person name="Scheeler F."/>
            <person name="Shen H."/>
            <person name="Shue B.C."/>
            <person name="Siden-Kiamos I."/>
            <person name="Simpson M."/>
            <person name="Skupski M.P."/>
            <person name="Smith T.J."/>
            <person name="Spier E."/>
            <person name="Spradling A.C."/>
            <person name="Stapleton M."/>
            <person name="Strong R."/>
            <person name="Sun E."/>
            <person name="Svirskas R."/>
            <person name="Tector C."/>
            <person name="Turner R."/>
            <person name="Venter E."/>
            <person name="Wang A.H."/>
            <person name="Wang X."/>
            <person name="Wang Z.-Y."/>
            <person name="Wassarman D.A."/>
            <person name="Weinstock G.M."/>
            <person name="Weissenbach J."/>
            <person name="Williams S.M."/>
            <person name="Woodage T."/>
            <person name="Worley K.C."/>
            <person name="Wu D."/>
            <person name="Yang S."/>
            <person name="Yao Q.A."/>
            <person name="Ye J."/>
            <person name="Yeh R.-F."/>
            <person name="Zaveri J.S."/>
            <person name="Zhan M."/>
            <person name="Zhang G."/>
            <person name="Zhao Q."/>
            <person name="Zheng L."/>
            <person name="Zheng X.H."/>
            <person name="Zhong F.N."/>
            <person name="Zhong W."/>
            <person name="Zhou X."/>
            <person name="Zhu S.C."/>
            <person name="Zhu X."/>
            <person name="Smith H.O."/>
            <person name="Gibbs R.A."/>
            <person name="Myers E.W."/>
            <person name="Rubin G.M."/>
            <person name="Venter J.C."/>
        </authorList>
    </citation>
    <scope>NUCLEOTIDE SEQUENCE [LARGE SCALE GENOMIC DNA]</scope>
    <source>
        <strain>Berkeley</strain>
    </source>
</reference>
<reference key="3">
    <citation type="journal article" date="2002" name="Genome Biol.">
        <title>Annotation of the Drosophila melanogaster euchromatic genome: a systematic review.</title>
        <authorList>
            <person name="Misra S."/>
            <person name="Crosby M.A."/>
            <person name="Mungall C.J."/>
            <person name="Matthews B.B."/>
            <person name="Campbell K.S."/>
            <person name="Hradecky P."/>
            <person name="Huang Y."/>
            <person name="Kaminker J.S."/>
            <person name="Millburn G.H."/>
            <person name="Prochnik S.E."/>
            <person name="Smith C.D."/>
            <person name="Tupy J.L."/>
            <person name="Whitfield E.J."/>
            <person name="Bayraktaroglu L."/>
            <person name="Berman B.P."/>
            <person name="Bettencourt B.R."/>
            <person name="Celniker S.E."/>
            <person name="de Grey A.D.N.J."/>
            <person name="Drysdale R.A."/>
            <person name="Harris N.L."/>
            <person name="Richter J."/>
            <person name="Russo S."/>
            <person name="Schroeder A.J."/>
            <person name="Shu S.Q."/>
            <person name="Stapleton M."/>
            <person name="Yamada C."/>
            <person name="Ashburner M."/>
            <person name="Gelbart W.M."/>
            <person name="Rubin G.M."/>
            <person name="Lewis S.E."/>
        </authorList>
    </citation>
    <scope>GENOME REANNOTATION</scope>
    <source>
        <strain>Berkeley</strain>
    </source>
</reference>
<reference key="4">
    <citation type="journal article" date="1992" name="Genes Dev.">
        <title>Breathless, a Drosophila FGF receptor homolog, is essential for migration of tracheal and specific midline glial cells.</title>
        <authorList>
            <person name="Klaembt C."/>
            <person name="Glazer L."/>
            <person name="Shilo B.-Z."/>
        </authorList>
    </citation>
    <scope>NUCLEOTIDE SEQUENCE [GENOMIC DNA] OF 1-240</scope>
    <scope>FUNCTION</scope>
    <scope>TISSUE SPECIFICITY</scope>
</reference>
<reference key="5">
    <citation type="journal article" date="1991" name="Genes Dev.">
        <title>The Drosophila FGF-R homolog is expressed in the embryonic tracheal system and appears to be required for directed tracheal cell extension.</title>
        <authorList>
            <person name="Glazer L."/>
            <person name="Shilo B.-Z."/>
        </authorList>
    </citation>
    <scope>NUCLEOTIDE SEQUENCE [MRNA] OF 262-1052</scope>
    <scope>FUNCTION</scope>
    <scope>TISSUE SPECIFICITY</scope>
    <scope>DEVELOPMENTAL STAGE</scope>
    <source>
        <tissue>Embryo</tissue>
    </source>
</reference>
<reference key="6">
    <citation type="journal article" date="1991" name="FEBS Lett.">
        <title>Identification of seven novel protein-tyrosine kinase genes of Drosophila by the polymerase chain reaction.</title>
        <authorList>
            <person name="Shishido E."/>
            <person name="Emori Y."/>
            <person name="Saigo K."/>
        </authorList>
    </citation>
    <scope>NUCLEOTIDE SEQUENCE [GENOMIC DNA] OF 868-923</scope>
</reference>
<reference key="7">
    <citation type="journal article" date="1998" name="Biochem. Biophys. Res. Commun.">
        <title>Sampling the genomic pool of protein tyrosine kinase genes using the polymerase chain reaction with genomic DNA.</title>
        <authorList>
            <person name="Oates A.C."/>
            <person name="Wollberg P."/>
            <person name="Achen M.G."/>
            <person name="Wilks A.F."/>
        </authorList>
    </citation>
    <scope>NUCLEOTIDE SEQUENCE [GENOMIC DNA] OF 870-922</scope>
</reference>
<comment type="function">
    <text evidence="7 8 9">May be required for patterning of muscle precursor cells: generation of mesodermal and endodermal layers, invaginations of various types of cells, and CNS formation. Essential for the ability of the migrating tracheal and midline cells to recognize external guiding cues.</text>
</comment>
<comment type="catalytic activity">
    <reaction evidence="5">
        <text>L-tyrosyl-[protein] + ATP = O-phospho-L-tyrosyl-[protein] + ADP + H(+)</text>
        <dbReference type="Rhea" id="RHEA:10596"/>
        <dbReference type="Rhea" id="RHEA-COMP:10136"/>
        <dbReference type="Rhea" id="RHEA-COMP:20101"/>
        <dbReference type="ChEBI" id="CHEBI:15378"/>
        <dbReference type="ChEBI" id="CHEBI:30616"/>
        <dbReference type="ChEBI" id="CHEBI:46858"/>
        <dbReference type="ChEBI" id="CHEBI:61978"/>
        <dbReference type="ChEBI" id="CHEBI:456216"/>
        <dbReference type="EC" id="2.7.10.1"/>
    </reaction>
</comment>
<comment type="subcellular location">
    <subcellularLocation>
        <location>Membrane</location>
        <topology>Single-pass type I membrane protein</topology>
    </subcellularLocation>
</comment>
<comment type="tissue specificity">
    <text evidence="7 8 9">During embryogenesis, expression is seen in mesoderm, endodermal precursor cells, CNS midline cells and trachea and salivary duct ectodermal cells.</text>
</comment>
<comment type="developmental stage">
    <text evidence="8">All stages of development.</text>
</comment>
<comment type="similarity">
    <text evidence="4">Belongs to the protein kinase superfamily. Tyr protein kinase family. Fibroblast growth factor receptor subfamily.</text>
</comment>
<name>FGFR2_DROME</name>
<dbReference type="EC" id="2.7.10.1"/>
<dbReference type="EMBL" id="X74031">
    <property type="protein sequence ID" value="CAA52190.1"/>
    <property type="molecule type" value="mRNA"/>
</dbReference>
<dbReference type="EMBL" id="AE014296">
    <property type="protein sequence ID" value="AAF49759.1"/>
    <property type="molecule type" value="Genomic_DNA"/>
</dbReference>
<dbReference type="EMBL" id="AE014296">
    <property type="protein sequence ID" value="AAX52746.1"/>
    <property type="molecule type" value="Genomic_DNA"/>
</dbReference>
<dbReference type="EMBL" id="X72830">
    <property type="protein sequence ID" value="CAA51340.1"/>
    <property type="molecule type" value="Genomic_DNA"/>
</dbReference>
<dbReference type="EMBL" id="X57746">
    <property type="protein sequence ID" value="CAA40912.1"/>
    <property type="molecule type" value="mRNA"/>
</dbReference>
<dbReference type="EMBL" id="S55971">
    <property type="protein sequence ID" value="AAB19904.1"/>
    <property type="molecule type" value="Genomic_DNA"/>
</dbReference>
<dbReference type="EMBL" id="AJ002918">
    <property type="protein sequence ID" value="CAA05753.1"/>
    <property type="molecule type" value="Genomic_DNA"/>
</dbReference>
<dbReference type="PIR" id="A39627">
    <property type="entry name" value="A39627"/>
</dbReference>
<dbReference type="PIR" id="A44065">
    <property type="entry name" value="A44065"/>
</dbReference>
<dbReference type="PIR" id="B49120">
    <property type="entry name" value="B49120"/>
</dbReference>
<dbReference type="RefSeq" id="NP_001014583.1">
    <property type="nucleotide sequence ID" value="NM_001014583.2"/>
</dbReference>
<dbReference type="RefSeq" id="NP_729956.1">
    <property type="nucleotide sequence ID" value="NM_168577.3"/>
</dbReference>
<dbReference type="SMR" id="Q09147"/>
<dbReference type="BioGRID" id="64900">
    <property type="interactions" value="26"/>
</dbReference>
<dbReference type="FunCoup" id="Q09147">
    <property type="interactions" value="149"/>
</dbReference>
<dbReference type="IntAct" id="Q09147">
    <property type="interactions" value="6"/>
</dbReference>
<dbReference type="STRING" id="7227.FBpp0075520"/>
<dbReference type="GlyCosmos" id="Q09147">
    <property type="glycosylation" value="15 sites, No reported glycans"/>
</dbReference>
<dbReference type="GlyGen" id="Q09147">
    <property type="glycosylation" value="15 sites"/>
</dbReference>
<dbReference type="PaxDb" id="7227-FBpp0075520"/>
<dbReference type="EnsemblMetazoa" id="FBtr0075778">
    <property type="protein sequence ID" value="FBpp0075520"/>
    <property type="gene ID" value="FBgn0285896"/>
</dbReference>
<dbReference type="EnsemblMetazoa" id="FBtr0100676">
    <property type="protein sequence ID" value="FBpp0100143"/>
    <property type="gene ID" value="FBgn0285896"/>
</dbReference>
<dbReference type="GeneID" id="39564"/>
<dbReference type="KEGG" id="dme:Dmel_CG32134"/>
<dbReference type="UCSC" id="CG32134-RB">
    <property type="organism name" value="d. melanogaster"/>
</dbReference>
<dbReference type="AGR" id="FB:FBgn0285896"/>
<dbReference type="CTD" id="39564"/>
<dbReference type="FlyBase" id="FBgn0285896">
    <property type="gene designation" value="btl"/>
</dbReference>
<dbReference type="VEuPathDB" id="VectorBase:FBgn0285896"/>
<dbReference type="eggNOG" id="KOG0200">
    <property type="taxonomic scope" value="Eukaryota"/>
</dbReference>
<dbReference type="GeneTree" id="ENSGT00940000167157"/>
<dbReference type="HOGENOM" id="CLU_000288_74_1_1"/>
<dbReference type="InParanoid" id="Q09147"/>
<dbReference type="OMA" id="YVQILKX"/>
<dbReference type="OrthoDB" id="5984265at2759"/>
<dbReference type="PhylomeDB" id="Q09147"/>
<dbReference type="BRENDA" id="2.7.10.1">
    <property type="organism ID" value="1994"/>
</dbReference>
<dbReference type="Reactome" id="R-DME-109704">
    <property type="pathway name" value="PI3K Cascade"/>
</dbReference>
<dbReference type="Reactome" id="R-DME-1257604">
    <property type="pathway name" value="PIP3 activates AKT signaling"/>
</dbReference>
<dbReference type="Reactome" id="R-DME-1307965">
    <property type="pathway name" value="betaKlotho-mediated ligand binding"/>
</dbReference>
<dbReference type="Reactome" id="R-DME-190322">
    <property type="pathway name" value="FGFR4 ligand binding and activation"/>
</dbReference>
<dbReference type="Reactome" id="R-DME-190370">
    <property type="pathway name" value="FGFR1b ligand binding and activation"/>
</dbReference>
<dbReference type="Reactome" id="R-DME-190371">
    <property type="pathway name" value="FGFR3b ligand binding and activation"/>
</dbReference>
<dbReference type="Reactome" id="R-DME-190372">
    <property type="pathway name" value="FGFR3c ligand binding and activation"/>
</dbReference>
<dbReference type="Reactome" id="R-DME-190373">
    <property type="pathway name" value="FGFR1c ligand binding and activation"/>
</dbReference>
<dbReference type="Reactome" id="R-DME-190374">
    <property type="pathway name" value="FGFR1c and Klotho ligand binding and activation"/>
</dbReference>
<dbReference type="Reactome" id="R-DME-190375">
    <property type="pathway name" value="FGFR2c ligand binding and activation"/>
</dbReference>
<dbReference type="Reactome" id="R-DME-190377">
    <property type="pathway name" value="FGFR2b ligand binding and activation"/>
</dbReference>
<dbReference type="Reactome" id="R-DME-5654219">
    <property type="pathway name" value="Phospholipase C-mediated cascade: FGFR1"/>
</dbReference>
<dbReference type="Reactome" id="R-DME-5654221">
    <property type="pathway name" value="Phospholipase C-mediated cascade, FGFR2"/>
</dbReference>
<dbReference type="Reactome" id="R-DME-5654227">
    <property type="pathway name" value="Phospholipase C-mediated cascade, FGFR3"/>
</dbReference>
<dbReference type="Reactome" id="R-DME-5654228">
    <property type="pathway name" value="Phospholipase C-mediated cascade, FGFR4"/>
</dbReference>
<dbReference type="Reactome" id="R-DME-5654687">
    <property type="pathway name" value="Downstream signaling of activated FGFR1"/>
</dbReference>
<dbReference type="Reactome" id="R-DME-5654688">
    <property type="pathway name" value="SHC-mediated cascade:FGFR1"/>
</dbReference>
<dbReference type="Reactome" id="R-DME-5654689">
    <property type="pathway name" value="PI-3K cascade:FGFR1"/>
</dbReference>
<dbReference type="Reactome" id="R-DME-5654693">
    <property type="pathway name" value="FRS-mediated FGFR1 signaling"/>
</dbReference>
<dbReference type="Reactome" id="R-DME-5654695">
    <property type="pathway name" value="PI-3K cascade:FGFR2"/>
</dbReference>
<dbReference type="Reactome" id="R-DME-5654699">
    <property type="pathway name" value="SHC-mediated cascade:FGFR2"/>
</dbReference>
<dbReference type="Reactome" id="R-DME-5654700">
    <property type="pathway name" value="FRS-mediated FGFR2 signaling"/>
</dbReference>
<dbReference type="Reactome" id="R-DME-5654704">
    <property type="pathway name" value="SHC-mediated cascade:FGFR3"/>
</dbReference>
<dbReference type="Reactome" id="R-DME-5654706">
    <property type="pathway name" value="FRS-mediated FGFR3 signaling"/>
</dbReference>
<dbReference type="Reactome" id="R-DME-5654710">
    <property type="pathway name" value="PI-3K cascade:FGFR3"/>
</dbReference>
<dbReference type="Reactome" id="R-DME-5654712">
    <property type="pathway name" value="FRS-mediated FGFR4 signaling"/>
</dbReference>
<dbReference type="Reactome" id="R-DME-5654719">
    <property type="pathway name" value="SHC-mediated cascade:FGFR4"/>
</dbReference>
<dbReference type="Reactome" id="R-DME-5654720">
    <property type="pathway name" value="PI-3K cascade:FGFR4"/>
</dbReference>
<dbReference type="Reactome" id="R-DME-5654726">
    <property type="pathway name" value="Negative regulation of FGFR1 signaling"/>
</dbReference>
<dbReference type="Reactome" id="R-DME-5654727">
    <property type="pathway name" value="Negative regulation of FGFR2 signaling"/>
</dbReference>
<dbReference type="Reactome" id="R-DME-5654732">
    <property type="pathway name" value="Negative regulation of FGFR3 signaling"/>
</dbReference>
<dbReference type="Reactome" id="R-DME-5654733">
    <property type="pathway name" value="Negative regulation of FGFR4 signaling"/>
</dbReference>
<dbReference type="Reactome" id="R-DME-5673001">
    <property type="pathway name" value="RAF/MAP kinase cascade"/>
</dbReference>
<dbReference type="Reactome" id="R-DME-6811558">
    <property type="pathway name" value="PI5P, PP2A and IER3 Regulate PI3K/AKT Signaling"/>
</dbReference>
<dbReference type="SignaLink" id="Q09147"/>
<dbReference type="BioGRID-ORCS" id="39564">
    <property type="hits" value="0 hits in 3 CRISPR screens"/>
</dbReference>
<dbReference type="GenomeRNAi" id="39564"/>
<dbReference type="PRO" id="PR:Q09147"/>
<dbReference type="Proteomes" id="UP000000803">
    <property type="component" value="Chromosome 3L"/>
</dbReference>
<dbReference type="Bgee" id="FBgn0285896">
    <property type="expression patterns" value="Expressed in ventral midline and 34 other cell types or tissues"/>
</dbReference>
<dbReference type="ExpressionAtlas" id="Q09147">
    <property type="expression patterns" value="baseline and differential"/>
</dbReference>
<dbReference type="GO" id="GO:0035230">
    <property type="term" value="C:cytoneme"/>
    <property type="evidence" value="ECO:0000314"/>
    <property type="project" value="FlyBase"/>
</dbReference>
<dbReference type="GO" id="GO:0005886">
    <property type="term" value="C:plasma membrane"/>
    <property type="evidence" value="ECO:0000314"/>
    <property type="project" value="FlyBase"/>
</dbReference>
<dbReference type="GO" id="GO:0043235">
    <property type="term" value="C:receptor complex"/>
    <property type="evidence" value="ECO:0000318"/>
    <property type="project" value="GO_Central"/>
</dbReference>
<dbReference type="GO" id="GO:0005524">
    <property type="term" value="F:ATP binding"/>
    <property type="evidence" value="ECO:0007669"/>
    <property type="project" value="UniProtKB-KW"/>
</dbReference>
<dbReference type="GO" id="GO:0005007">
    <property type="term" value="F:fibroblast growth factor receptor activity"/>
    <property type="evidence" value="ECO:0000314"/>
    <property type="project" value="FlyBase"/>
</dbReference>
<dbReference type="GO" id="GO:0004714">
    <property type="term" value="F:transmembrane receptor protein tyrosine kinase activity"/>
    <property type="evidence" value="ECO:0000318"/>
    <property type="project" value="GO_Central"/>
</dbReference>
<dbReference type="GO" id="GO:0007298">
    <property type="term" value="P:border follicle cell migration"/>
    <property type="evidence" value="ECO:0000315"/>
    <property type="project" value="FlyBase"/>
</dbReference>
<dbReference type="GO" id="GO:0035147">
    <property type="term" value="P:branch fusion, open tracheal system"/>
    <property type="evidence" value="ECO:0000315"/>
    <property type="project" value="FlyBase"/>
</dbReference>
<dbReference type="GO" id="GO:0060446">
    <property type="term" value="P:branching involved in open tracheal system development"/>
    <property type="evidence" value="ECO:0000314"/>
    <property type="project" value="FlyBase"/>
</dbReference>
<dbReference type="GO" id="GO:0001745">
    <property type="term" value="P:compound eye morphogenesis"/>
    <property type="evidence" value="ECO:0000315"/>
    <property type="project" value="FlyBase"/>
</dbReference>
<dbReference type="GO" id="GO:0007427">
    <property type="term" value="P:epithelial cell migration, open tracheal system"/>
    <property type="evidence" value="ECO:0000315"/>
    <property type="project" value="FlyBase"/>
</dbReference>
<dbReference type="GO" id="GO:0035153">
    <property type="term" value="P:epithelial cell type specification, open tracheal system"/>
    <property type="evidence" value="ECO:0000315"/>
    <property type="project" value="FlyBase"/>
</dbReference>
<dbReference type="GO" id="GO:0008543">
    <property type="term" value="P:fibroblast growth factor receptor signaling pathway"/>
    <property type="evidence" value="ECO:0000314"/>
    <property type="project" value="FlyBase"/>
</dbReference>
<dbReference type="GO" id="GO:0046847">
    <property type="term" value="P:filopodium assembly"/>
    <property type="evidence" value="ECO:0000315"/>
    <property type="project" value="FlyBase"/>
</dbReference>
<dbReference type="GO" id="GO:0035215">
    <property type="term" value="P:genital disc development"/>
    <property type="evidence" value="ECO:0000270"/>
    <property type="project" value="FlyBase"/>
</dbReference>
<dbReference type="GO" id="GO:0008347">
    <property type="term" value="P:glial cell migration"/>
    <property type="evidence" value="ECO:0000315"/>
    <property type="project" value="FlyBase"/>
</dbReference>
<dbReference type="GO" id="GO:0035149">
    <property type="term" value="P:lumen formation, open tracheal system"/>
    <property type="evidence" value="ECO:0000316"/>
    <property type="project" value="FlyBase"/>
</dbReference>
<dbReference type="GO" id="GO:0030517">
    <property type="term" value="P:negative regulation of axon extension"/>
    <property type="evidence" value="ECO:0000315"/>
    <property type="project" value="FlyBase"/>
</dbReference>
<dbReference type="GO" id="GO:0042690">
    <property type="term" value="P:negative regulation of crystal cell differentiation"/>
    <property type="evidence" value="ECO:0000315"/>
    <property type="project" value="FlyBase"/>
</dbReference>
<dbReference type="GO" id="GO:0045614">
    <property type="term" value="P:negative regulation of plasmatocyte differentiation"/>
    <property type="evidence" value="ECO:0000315"/>
    <property type="project" value="FlyBase"/>
</dbReference>
<dbReference type="GO" id="GO:0007424">
    <property type="term" value="P:open tracheal system development"/>
    <property type="evidence" value="ECO:0000315"/>
    <property type="project" value="FlyBase"/>
</dbReference>
<dbReference type="GO" id="GO:0008284">
    <property type="term" value="P:positive regulation of cell population proliferation"/>
    <property type="evidence" value="ECO:0000315"/>
    <property type="project" value="FlyBase"/>
</dbReference>
<dbReference type="GO" id="GO:0043410">
    <property type="term" value="P:positive regulation of MAPK cascade"/>
    <property type="evidence" value="ECO:0000318"/>
    <property type="project" value="GO_Central"/>
</dbReference>
<dbReference type="GO" id="GO:0035008">
    <property type="term" value="P:positive regulation of melanization defense response"/>
    <property type="evidence" value="ECO:0000315"/>
    <property type="project" value="FlyBase"/>
</dbReference>
<dbReference type="GO" id="GO:0045887">
    <property type="term" value="P:positive regulation of synaptic assembly at neuromuscular junction"/>
    <property type="evidence" value="ECO:0000316"/>
    <property type="project" value="FlyBase"/>
</dbReference>
<dbReference type="GO" id="GO:0007428">
    <property type="term" value="P:primary branching, open tracheal system"/>
    <property type="evidence" value="ECO:0000315"/>
    <property type="project" value="FlyBase"/>
</dbReference>
<dbReference type="GO" id="GO:0007429">
    <property type="term" value="P:secondary branching, open tracheal system"/>
    <property type="evidence" value="ECO:0000315"/>
    <property type="project" value="FlyBase"/>
</dbReference>
<dbReference type="GO" id="GO:0007430">
    <property type="term" value="P:terminal branching, open tracheal system"/>
    <property type="evidence" value="ECO:0000315"/>
    <property type="project" value="FlyBase"/>
</dbReference>
<dbReference type="GO" id="GO:0035154">
    <property type="term" value="P:terminal cell fate specification, open tracheal system"/>
    <property type="evidence" value="ECO:0000315"/>
    <property type="project" value="FlyBase"/>
</dbReference>
<dbReference type="GO" id="GO:0060438">
    <property type="term" value="P:trachea development"/>
    <property type="evidence" value="ECO:0000315"/>
    <property type="project" value="FlyBase"/>
</dbReference>
<dbReference type="GO" id="GO:0007426">
    <property type="term" value="P:tracheal outgrowth, open tracheal system"/>
    <property type="evidence" value="ECO:0000315"/>
    <property type="project" value="FlyBase"/>
</dbReference>
<dbReference type="GO" id="GO:0035202">
    <property type="term" value="P:tracheal pit formation in open tracheal system"/>
    <property type="evidence" value="ECO:0000315"/>
    <property type="project" value="FlyBase"/>
</dbReference>
<dbReference type="FunFam" id="2.60.40.10:FF:000020">
    <property type="entry name" value="Fibroblast growth factor receptor"/>
    <property type="match status" value="1"/>
</dbReference>
<dbReference type="FunFam" id="3.30.200.20:FF:000651">
    <property type="entry name" value="Fibroblast growth factor receptor"/>
    <property type="match status" value="1"/>
</dbReference>
<dbReference type="FunFam" id="1.10.510.10:FF:000983">
    <property type="entry name" value="Fibroblast growth factor receptor homolog 2"/>
    <property type="match status" value="1"/>
</dbReference>
<dbReference type="Gene3D" id="2.60.40.10">
    <property type="entry name" value="Immunoglobulins"/>
    <property type="match status" value="4"/>
</dbReference>
<dbReference type="Gene3D" id="3.30.200.20">
    <property type="entry name" value="Phosphorylase Kinase, domain 1"/>
    <property type="match status" value="1"/>
</dbReference>
<dbReference type="Gene3D" id="1.10.510.10">
    <property type="entry name" value="Transferase(Phosphotransferase) domain 1"/>
    <property type="match status" value="1"/>
</dbReference>
<dbReference type="InterPro" id="IPR007110">
    <property type="entry name" value="Ig-like_dom"/>
</dbReference>
<dbReference type="InterPro" id="IPR036179">
    <property type="entry name" value="Ig-like_dom_sf"/>
</dbReference>
<dbReference type="InterPro" id="IPR013783">
    <property type="entry name" value="Ig-like_fold"/>
</dbReference>
<dbReference type="InterPro" id="IPR013098">
    <property type="entry name" value="Ig_I-set"/>
</dbReference>
<dbReference type="InterPro" id="IPR003599">
    <property type="entry name" value="Ig_sub"/>
</dbReference>
<dbReference type="InterPro" id="IPR003598">
    <property type="entry name" value="Ig_sub2"/>
</dbReference>
<dbReference type="InterPro" id="IPR013151">
    <property type="entry name" value="Immunoglobulin_dom"/>
</dbReference>
<dbReference type="InterPro" id="IPR011009">
    <property type="entry name" value="Kinase-like_dom_sf"/>
</dbReference>
<dbReference type="InterPro" id="IPR000719">
    <property type="entry name" value="Prot_kinase_dom"/>
</dbReference>
<dbReference type="InterPro" id="IPR017441">
    <property type="entry name" value="Protein_kinase_ATP_BS"/>
</dbReference>
<dbReference type="InterPro" id="IPR050122">
    <property type="entry name" value="RTK"/>
</dbReference>
<dbReference type="InterPro" id="IPR001245">
    <property type="entry name" value="Ser-Thr/Tyr_kinase_cat_dom"/>
</dbReference>
<dbReference type="InterPro" id="IPR008266">
    <property type="entry name" value="Tyr_kinase_AS"/>
</dbReference>
<dbReference type="InterPro" id="IPR020635">
    <property type="entry name" value="Tyr_kinase_cat_dom"/>
</dbReference>
<dbReference type="PANTHER" id="PTHR24416:SF550">
    <property type="entry name" value="FIBROBLAST GROWTH FACTOR RECEPTOR HOMOLOG 1-RELATED"/>
    <property type="match status" value="1"/>
</dbReference>
<dbReference type="PANTHER" id="PTHR24416">
    <property type="entry name" value="TYROSINE-PROTEIN KINASE RECEPTOR"/>
    <property type="match status" value="1"/>
</dbReference>
<dbReference type="Pfam" id="PF07679">
    <property type="entry name" value="I-set"/>
    <property type="match status" value="1"/>
</dbReference>
<dbReference type="Pfam" id="PF00047">
    <property type="entry name" value="ig"/>
    <property type="match status" value="1"/>
</dbReference>
<dbReference type="Pfam" id="PF13927">
    <property type="entry name" value="Ig_3"/>
    <property type="match status" value="2"/>
</dbReference>
<dbReference type="Pfam" id="PF07714">
    <property type="entry name" value="PK_Tyr_Ser-Thr"/>
    <property type="match status" value="1"/>
</dbReference>
<dbReference type="PIRSF" id="PIRSF000615">
    <property type="entry name" value="TyrPK_CSF1-R"/>
    <property type="match status" value="1"/>
</dbReference>
<dbReference type="PRINTS" id="PR00109">
    <property type="entry name" value="TYRKINASE"/>
</dbReference>
<dbReference type="SMART" id="SM00409">
    <property type="entry name" value="IG"/>
    <property type="match status" value="5"/>
</dbReference>
<dbReference type="SMART" id="SM00408">
    <property type="entry name" value="IGc2"/>
    <property type="match status" value="4"/>
</dbReference>
<dbReference type="SMART" id="SM00219">
    <property type="entry name" value="TyrKc"/>
    <property type="match status" value="1"/>
</dbReference>
<dbReference type="SUPFAM" id="SSF48726">
    <property type="entry name" value="Immunoglobulin"/>
    <property type="match status" value="4"/>
</dbReference>
<dbReference type="SUPFAM" id="SSF56112">
    <property type="entry name" value="Protein kinase-like (PK-like)"/>
    <property type="match status" value="1"/>
</dbReference>
<dbReference type="PROSITE" id="PS50835">
    <property type="entry name" value="IG_LIKE"/>
    <property type="match status" value="4"/>
</dbReference>
<dbReference type="PROSITE" id="PS00107">
    <property type="entry name" value="PROTEIN_KINASE_ATP"/>
    <property type="match status" value="1"/>
</dbReference>
<dbReference type="PROSITE" id="PS50011">
    <property type="entry name" value="PROTEIN_KINASE_DOM"/>
    <property type="match status" value="1"/>
</dbReference>
<dbReference type="PROSITE" id="PS00109">
    <property type="entry name" value="PROTEIN_KINASE_TYR"/>
    <property type="match status" value="1"/>
</dbReference>
<sequence length="1052" mass="117813">MAKVPITLVMIIAIVSAAADLGCDYGHHRCYIDVTVENSPRQRHLLSDMDITLQCVRPMAKWFYEDKFQLRATLLRLERAQSGNSGNYGCLDSQNRWYNISLVVGHKEPVGNDIASFVKLEDAPALPESDLFFQPLNESRSLKLLQPLPKTVQRTAGGLFQLNCSPMDPDAKGVNISWLHNDTQILGGRGRIKLKRWSLTVGQLQPEDAGSYHCELCVEQDCQRSNPTQLEVISRKHTVPMLKPGYPRNTSIALGDNVSIECLLEDSALEPKITWLHKGNADNIDDLLQRLREQSQLPVDVTRLITRMDEPQVLRLGNVLMEDGGWYICIAENQVGRTVAASYVDLYSPSDTTTVRTTTTTTVASPIPTASTGEDNDDDVENPAAEASGGVGPPVFRKELKRLQHSLSGNTVNLACPVYGKANITWTKDKKPLNRELGVYVQKNWTLRFVEATSEDSGLYNCKVCNAWGCIQFDFSVQINDRTRSAPIIVVPQNQTVKVNGSLVMKCTVYSDLHPTVSWKRVVLKNASLDGLKSVEIQNLNFTVTNDSVVLTLRNVTFDQEGWYTCLASSGLGRSNSSVYLRVVSPLPPLEIYALLHAHPLGFTLAAITIVALFLLGSAFITFMLRRLRREKLLKLRIETVHQWTKKVIIYRPGGEEGSGCSSGDLQMPVIRIEKQRTTVSTTGTGGTDPAQGFNEYEFPLDSNWEIPRQQLSLGSILGEGAFGRVVMAEAEGLPRSPQLAETIVAVKMVKEEHTDTDMASLVREMEVMKMIGKHINIINLLGCCSQGGPLWVIVEYAPHGNLKDFLKQNRPGAPQRRSDSDGYLDDKPLISTQHLGEKELTKFAFQIARGMEYLASRRCIHRDLAARNVLVSDGYVMKIADFGLARDIQDTEYYRKNTNGRLPIKWMAPESLQEKKYDSQSDVWSYGVLLWEIMTYGDQPYPHILSAEELYSYLITGQRMEKPAKCSLNIYVVMRQCWHFESCARPTFAELVESFDGILQQASSNPNDAYLDLSMPMLETPPSSGDEDDGSDTETFRETSPLRYQYTYKFN</sequence>
<gene>
    <name type="primary">btl</name>
    <name type="synonym">FR2</name>
    <name type="synonym">HD-311</name>
    <name type="synonym">Tk2</name>
    <name type="ORF">CG32134</name>
</gene>
<keyword id="KW-0067">ATP-binding</keyword>
<keyword id="KW-0217">Developmental protein</keyword>
<keyword id="KW-1015">Disulfide bond</keyword>
<keyword id="KW-0325">Glycoprotein</keyword>
<keyword id="KW-0393">Immunoglobulin domain</keyword>
<keyword id="KW-0418">Kinase</keyword>
<keyword id="KW-0472">Membrane</keyword>
<keyword id="KW-0547">Nucleotide-binding</keyword>
<keyword id="KW-0597">Phosphoprotein</keyword>
<keyword id="KW-0675">Receptor</keyword>
<keyword id="KW-1185">Reference proteome</keyword>
<keyword id="KW-0677">Repeat</keyword>
<keyword id="KW-0732">Signal</keyword>
<keyword id="KW-0808">Transferase</keyword>
<keyword id="KW-0812">Transmembrane</keyword>
<keyword id="KW-1133">Transmembrane helix</keyword>
<keyword id="KW-0829">Tyrosine-protein kinase</keyword>
<feature type="signal peptide" evidence="2">
    <location>
        <begin position="1"/>
        <end position="19"/>
    </location>
</feature>
<feature type="chain" id="PRO_0000016795" description="Fibroblast growth factor receptor homolog 2">
    <location>
        <begin position="20"/>
        <end position="1052"/>
    </location>
</feature>
<feature type="topological domain" description="Extracellular" evidence="2">
    <location>
        <begin position="20"/>
        <end position="600"/>
    </location>
</feature>
<feature type="transmembrane region" description="Helical" evidence="2">
    <location>
        <begin position="601"/>
        <end position="626"/>
    </location>
</feature>
<feature type="topological domain" description="Cytoplasmic" evidence="2">
    <location>
        <begin position="627"/>
        <end position="1052"/>
    </location>
</feature>
<feature type="domain" description="Ig-like C2-type 1">
    <location>
        <begin position="23"/>
        <end position="117"/>
    </location>
</feature>
<feature type="domain" description="Ig-like C2-type 2">
    <location>
        <begin position="124"/>
        <end position="230"/>
    </location>
</feature>
<feature type="domain" description="Ig-like C2-type 3">
    <location>
        <begin position="240"/>
        <end position="340"/>
    </location>
</feature>
<feature type="domain" description="Ig-like C2-type 4">
    <location>
        <begin position="393"/>
        <end position="478"/>
    </location>
</feature>
<feature type="domain" description="Ig-like C2-type 5">
    <location>
        <begin position="487"/>
        <end position="585"/>
    </location>
</feature>
<feature type="domain" description="Protein kinase" evidence="4">
    <location>
        <begin position="712"/>
        <end position="1000"/>
    </location>
</feature>
<feature type="region of interest" description="Disordered" evidence="6">
    <location>
        <begin position="358"/>
        <end position="393"/>
    </location>
</feature>
<feature type="region of interest" description="Disordered" evidence="6">
    <location>
        <begin position="1017"/>
        <end position="1038"/>
    </location>
</feature>
<feature type="compositionally biased region" description="Low complexity" evidence="6">
    <location>
        <begin position="358"/>
        <end position="372"/>
    </location>
</feature>
<feature type="active site" description="Proton acceptor" evidence="4 5">
    <location>
        <position position="864"/>
    </location>
</feature>
<feature type="binding site" evidence="4">
    <location>
        <begin position="718"/>
        <end position="726"/>
    </location>
    <ligand>
        <name>ATP</name>
        <dbReference type="ChEBI" id="CHEBI:30616"/>
    </ligand>
</feature>
<feature type="binding site" evidence="4">
    <location>
        <position position="748"/>
    </location>
    <ligand>
        <name>ATP</name>
        <dbReference type="ChEBI" id="CHEBI:30616"/>
    </ligand>
</feature>
<feature type="modified residue" description="Phosphotyrosine; by autocatalysis" evidence="1">
    <location>
        <position position="895"/>
    </location>
</feature>
<feature type="glycosylation site" description="N-linked (GlcNAc...) asparagine" evidence="2">
    <location>
        <position position="99"/>
    </location>
</feature>
<feature type="glycosylation site" description="N-linked (GlcNAc...) asparagine" evidence="2">
    <location>
        <position position="137"/>
    </location>
</feature>
<feature type="glycosylation site" description="N-linked (GlcNAc...) asparagine" evidence="2">
    <location>
        <position position="175"/>
    </location>
</feature>
<feature type="glycosylation site" description="N-linked (GlcNAc...) asparagine" evidence="2">
    <location>
        <position position="181"/>
    </location>
</feature>
<feature type="glycosylation site" description="N-linked (GlcNAc...) asparagine" evidence="2">
    <location>
        <position position="249"/>
    </location>
</feature>
<feature type="glycosylation site" description="N-linked (GlcNAc...) asparagine" evidence="2">
    <location>
        <position position="257"/>
    </location>
</feature>
<feature type="glycosylation site" description="N-linked (GlcNAc...) asparagine" evidence="2">
    <location>
        <position position="423"/>
    </location>
</feature>
<feature type="glycosylation site" description="N-linked (GlcNAc...) asparagine" evidence="2">
    <location>
        <position position="444"/>
    </location>
</feature>
<feature type="glycosylation site" description="N-linked (GlcNAc...) asparagine" evidence="2">
    <location>
        <position position="494"/>
    </location>
</feature>
<feature type="glycosylation site" description="N-linked (GlcNAc...) asparagine" evidence="2">
    <location>
        <position position="500"/>
    </location>
</feature>
<feature type="glycosylation site" description="N-linked (GlcNAc...) asparagine" evidence="2">
    <location>
        <position position="526"/>
    </location>
</feature>
<feature type="glycosylation site" description="N-linked (GlcNAc...) asparagine" evidence="2">
    <location>
        <position position="541"/>
    </location>
</feature>
<feature type="glycosylation site" description="N-linked (GlcNAc...) asparagine" evidence="2">
    <location>
        <position position="546"/>
    </location>
</feature>
<feature type="glycosylation site" description="N-linked (GlcNAc...) asparagine" evidence="2">
    <location>
        <position position="555"/>
    </location>
</feature>
<feature type="glycosylation site" description="N-linked (GlcNAc...) asparagine" evidence="2">
    <location>
        <position position="576"/>
    </location>
</feature>
<feature type="disulfide bond" evidence="3">
    <location>
        <begin position="30"/>
        <end position="90"/>
    </location>
</feature>
<feature type="disulfide bond" evidence="3">
    <location>
        <begin position="164"/>
        <end position="217"/>
    </location>
</feature>
<feature type="disulfide bond" evidence="3">
    <location>
        <begin position="262"/>
        <end position="329"/>
    </location>
</feature>
<feature type="disulfide bond" evidence="3">
    <location>
        <begin position="416"/>
        <end position="462"/>
    </location>
</feature>
<feature type="disulfide bond" evidence="3">
    <location>
        <begin position="507"/>
        <end position="566"/>
    </location>
</feature>
<feature type="sequence conflict" description="In Ref. 1; CAA52190 and 4; CAA51340." evidence="10" ref="1 4">
    <original>V</original>
    <variation>I</variation>
    <location>
        <position position="104"/>
    </location>
</feature>
<feature type="sequence conflict" description="In Ref. 1; CAA52190 and 4; CAA51340." evidence="10" ref="1 4">
    <original>L</original>
    <variation>I</variation>
    <location>
        <position position="126"/>
    </location>
</feature>
<feature type="sequence conflict" description="In Ref. 1; CAA52190." evidence="10" ref="1">
    <original>N</original>
    <variation>I</variation>
    <location>
        <position position="181"/>
    </location>
</feature>
<feature type="sequence conflict" description="In Ref. 5; CAA40912." evidence="10" ref="5">
    <original>L</original>
    <variation>F</variation>
    <location>
        <position position="287"/>
    </location>
</feature>
<feature type="sequence conflict" description="In Ref. 5; CAA40912." evidence="10" ref="5">
    <original>E</original>
    <variation>D</variation>
    <location>
        <position position="293"/>
    </location>
</feature>
<feature type="sequence conflict" description="In Ref. 1; CAA52190 and 5; CAA40912." evidence="10" ref="1 5">
    <original>E</original>
    <variation>D</variation>
    <location>
        <position position="386"/>
    </location>
</feature>
<feature type="sequence conflict" description="In Ref. 5; CAA40912." evidence="10" ref="5">
    <original>ND</original>
    <variation>KH</variation>
    <location>
        <begin position="480"/>
        <end position="481"/>
    </location>
</feature>
<feature type="sequence conflict" description="In Ref. 1; CAA52190 and 5; CAA40912." evidence="10" ref="1 5">
    <original>K</original>
    <variation>Q</variation>
    <location>
        <position position="533"/>
    </location>
</feature>
<feature type="sequence conflict" description="In Ref. 1; CAA52190." evidence="10" ref="1">
    <original>T</original>
    <variation>S</variation>
    <location>
        <position position="565"/>
    </location>
</feature>
<feature type="sequence conflict" description="In Ref. 1; CAA52190." evidence="10" ref="1">
    <original>A</original>
    <variation>P</variation>
    <location>
        <position position="845"/>
    </location>
</feature>
<feature type="sequence conflict" description="In Ref. 5; CAA40912." evidence="10" ref="5">
    <original>ESLQEKKYDSQ</original>
    <variation>SRCRRRSTTH</variation>
    <location>
        <begin position="911"/>
        <end position="921"/>
    </location>
</feature>
<feature type="sequence conflict" description="In Ref. 5; CAA40912." evidence="10" ref="5">
    <original>E</original>
    <variation>Q</variation>
    <location>
        <position position="982"/>
    </location>
</feature>
<protein>
    <recommendedName>
        <fullName>Fibroblast growth factor receptor homolog 2</fullName>
        <ecNumber>2.7.10.1</ecNumber>
    </recommendedName>
    <alternativeName>
        <fullName>Protein breathless</fullName>
    </alternativeName>
    <alternativeName>
        <fullName>Tyrosine kinase 2</fullName>
        <shortName>dTk2</shortName>
    </alternativeName>
    <alternativeName>
        <fullName>Tyrosine kinase receptor HD-311</fullName>
    </alternativeName>
    <alternativeName>
        <fullName>dFGF-R1</fullName>
    </alternativeName>
</protein>
<proteinExistence type="evidence at transcript level"/>
<organism>
    <name type="scientific">Drosophila melanogaster</name>
    <name type="common">Fruit fly</name>
    <dbReference type="NCBI Taxonomy" id="7227"/>
    <lineage>
        <taxon>Eukaryota</taxon>
        <taxon>Metazoa</taxon>
        <taxon>Ecdysozoa</taxon>
        <taxon>Arthropoda</taxon>
        <taxon>Hexapoda</taxon>
        <taxon>Insecta</taxon>
        <taxon>Pterygota</taxon>
        <taxon>Neoptera</taxon>
        <taxon>Endopterygota</taxon>
        <taxon>Diptera</taxon>
        <taxon>Brachycera</taxon>
        <taxon>Muscomorpha</taxon>
        <taxon>Ephydroidea</taxon>
        <taxon>Drosophilidae</taxon>
        <taxon>Drosophila</taxon>
        <taxon>Sophophora</taxon>
    </lineage>
</organism>